<reference key="1">
    <citation type="journal article" date="2005" name="Genome Biol.">
        <title>Full-length cDNAs from chicken bursal lymphocytes to facilitate gene function analysis.</title>
        <authorList>
            <person name="Caldwell R.B."/>
            <person name="Kierzek A.M."/>
            <person name="Arakawa H."/>
            <person name="Bezzubov Y."/>
            <person name="Zaim J."/>
            <person name="Fiedler P."/>
            <person name="Kutter S."/>
            <person name="Blagodatski A."/>
            <person name="Kostovska D."/>
            <person name="Koter M."/>
            <person name="Plachy J."/>
            <person name="Carninci P."/>
            <person name="Hayashizaki Y."/>
            <person name="Buerstedde J.-M."/>
        </authorList>
    </citation>
    <scope>NUCLEOTIDE SEQUENCE [LARGE SCALE MRNA]</scope>
    <source>
        <strain>CB</strain>
        <tissue>Bursa of Fabricius</tissue>
    </source>
</reference>
<sequence>MAVPGSSRRQPSNRGLVSHCTHHHIVVFLLTFFSYSLLHASRKTFSNVKVSISSQWTPSCLNSTTFELRPNELWNSNHLFPNAEEATLFLGTLDTIFLFSYAVGLFVSGIVGDRLNLRWVLSFGMCSSALVVFFFGTLTEWLHFYNKWFYCCLWVVNGLLQSTGWPCVVAVMGNWFGKAGRGFVFGLWSACASVGNILGAFLASCVLKYGYEYAFLVTASVQFAGGVIVFCGLLTSPKEVGLPELGADEEGSVEEDANRPLMGDDDADDDEGNYSIQAADTDSQPKAIGFFQACCLPGVVLYSLAYACLKLVNYSFFFWLPFYLSNNFGWKEAEADQLSIWYDVGGIIGGTIQGLISDVLQKRAPVLAISLLFAVGSLFGYSRSPNSKPINAVIMAITGFFIGGPSNMISSAISADLGRQDLVRGSSEALATVTGIVDGTGSIGAAVGQYLVSLIQENLGWMWVFYFFILMASSTILFISPLIVREIRLLLHERRLRMLAE</sequence>
<keyword id="KW-0256">Endoplasmic reticulum</keyword>
<keyword id="KW-0325">Glycoprotein</keyword>
<keyword id="KW-0458">Lysosome</keyword>
<keyword id="KW-0472">Membrane</keyword>
<keyword id="KW-1185">Reference proteome</keyword>
<keyword id="KW-0762">Sugar transport</keyword>
<keyword id="KW-0812">Transmembrane</keyword>
<keyword id="KW-1133">Transmembrane helix</keyword>
<keyword id="KW-0813">Transport</keyword>
<protein>
    <recommendedName>
        <fullName>Sugar phosphate exchanger 3</fullName>
    </recommendedName>
    <alternativeName>
        <fullName>Solute carrier family 37 member 3</fullName>
    </alternativeName>
</protein>
<proteinExistence type="evidence at transcript level"/>
<comment type="function">
    <text evidence="1">Unlike the other SLC37 members, seems to lack glucose-6-phosphate antiporter activity.</text>
</comment>
<comment type="subcellular location">
    <subcellularLocation>
        <location evidence="1">Endoplasmic reticulum membrane</location>
        <topology evidence="2">Multi-pass membrane protein</topology>
    </subcellularLocation>
    <subcellularLocation>
        <location evidence="1">Lysosome membrane</location>
        <topology evidence="2">Multi-pass membrane protein</topology>
    </subcellularLocation>
</comment>
<comment type="similarity">
    <text evidence="3">Belongs to the major facilitator superfamily. Organophosphate:Pi antiporter (OPA) (TC 2.A.1.4) family.</text>
</comment>
<gene>
    <name type="primary">SLC37A3</name>
    <name type="synonym">SPX3</name>
    <name type="ORF">RCJMB04_12a19</name>
</gene>
<organism>
    <name type="scientific">Gallus gallus</name>
    <name type="common">Chicken</name>
    <dbReference type="NCBI Taxonomy" id="9031"/>
    <lineage>
        <taxon>Eukaryota</taxon>
        <taxon>Metazoa</taxon>
        <taxon>Chordata</taxon>
        <taxon>Craniata</taxon>
        <taxon>Vertebrata</taxon>
        <taxon>Euteleostomi</taxon>
        <taxon>Archelosauria</taxon>
        <taxon>Archosauria</taxon>
        <taxon>Dinosauria</taxon>
        <taxon>Saurischia</taxon>
        <taxon>Theropoda</taxon>
        <taxon>Coelurosauria</taxon>
        <taxon>Aves</taxon>
        <taxon>Neognathae</taxon>
        <taxon>Galloanserae</taxon>
        <taxon>Galliformes</taxon>
        <taxon>Phasianidae</taxon>
        <taxon>Phasianinae</taxon>
        <taxon>Gallus</taxon>
    </lineage>
</organism>
<dbReference type="EMBL" id="AJ851620">
    <property type="protein sequence ID" value="CAH65254.1"/>
    <property type="molecule type" value="mRNA"/>
</dbReference>
<dbReference type="RefSeq" id="NP_001012556.1">
    <property type="nucleotide sequence ID" value="NM_001012538.1"/>
</dbReference>
<dbReference type="SMR" id="Q5F3N0"/>
<dbReference type="FunCoup" id="Q5F3N0">
    <property type="interactions" value="281"/>
</dbReference>
<dbReference type="STRING" id="9031.ENSGALP00000020927"/>
<dbReference type="GlyCosmos" id="Q5F3N0">
    <property type="glycosylation" value="2 sites, No reported glycans"/>
</dbReference>
<dbReference type="GlyGen" id="Q5F3N0">
    <property type="glycosylation" value="2 sites"/>
</dbReference>
<dbReference type="PaxDb" id="9031-ENSGALP00000020927"/>
<dbReference type="GeneID" id="418112"/>
<dbReference type="KEGG" id="gga:418112"/>
<dbReference type="CTD" id="84255"/>
<dbReference type="VEuPathDB" id="HostDB:geneid_418112"/>
<dbReference type="eggNOG" id="KOG2533">
    <property type="taxonomic scope" value="Eukaryota"/>
</dbReference>
<dbReference type="InParanoid" id="Q5F3N0"/>
<dbReference type="OrthoDB" id="3639251at2759"/>
<dbReference type="PhylomeDB" id="Q5F3N0"/>
<dbReference type="PRO" id="PR:Q5F3N0"/>
<dbReference type="Proteomes" id="UP000000539">
    <property type="component" value="Unassembled WGS sequence"/>
</dbReference>
<dbReference type="GO" id="GO:0005789">
    <property type="term" value="C:endoplasmic reticulum membrane"/>
    <property type="evidence" value="ECO:0000250"/>
    <property type="project" value="UniProtKB"/>
</dbReference>
<dbReference type="GO" id="GO:0005765">
    <property type="term" value="C:lysosomal membrane"/>
    <property type="evidence" value="ECO:0007669"/>
    <property type="project" value="UniProtKB-SubCell"/>
</dbReference>
<dbReference type="GO" id="GO:0022857">
    <property type="term" value="F:transmembrane transporter activity"/>
    <property type="evidence" value="ECO:0007669"/>
    <property type="project" value="InterPro"/>
</dbReference>
<dbReference type="CDD" id="cd17342">
    <property type="entry name" value="MFS_SLC37A3"/>
    <property type="match status" value="1"/>
</dbReference>
<dbReference type="FunFam" id="1.20.1250.20:FF:000028">
    <property type="entry name" value="Sugar phosphate exchanger 3 isoform 1"/>
    <property type="match status" value="1"/>
</dbReference>
<dbReference type="FunFam" id="1.20.1250.20:FF:000132">
    <property type="entry name" value="sugar phosphate exchanger 3 isoform X1"/>
    <property type="match status" value="1"/>
</dbReference>
<dbReference type="Gene3D" id="1.20.1250.20">
    <property type="entry name" value="MFS general substrate transporter like domains"/>
    <property type="match status" value="2"/>
</dbReference>
<dbReference type="InterPro" id="IPR011701">
    <property type="entry name" value="MFS"/>
</dbReference>
<dbReference type="InterPro" id="IPR020846">
    <property type="entry name" value="MFS_dom"/>
</dbReference>
<dbReference type="InterPro" id="IPR036259">
    <property type="entry name" value="MFS_trans_sf"/>
</dbReference>
<dbReference type="InterPro" id="IPR000849">
    <property type="entry name" value="Sugar_P_transporter"/>
</dbReference>
<dbReference type="PANTHER" id="PTHR43184">
    <property type="entry name" value="MAJOR FACILITATOR SUPERFAMILY TRANSPORTER 16, ISOFORM B"/>
    <property type="match status" value="1"/>
</dbReference>
<dbReference type="PANTHER" id="PTHR43184:SF12">
    <property type="entry name" value="SUGAR PHOSPHATE EXCHANGER 3"/>
    <property type="match status" value="1"/>
</dbReference>
<dbReference type="Pfam" id="PF07690">
    <property type="entry name" value="MFS_1"/>
    <property type="match status" value="1"/>
</dbReference>
<dbReference type="PIRSF" id="PIRSF002808">
    <property type="entry name" value="Hexose_phosphate_transp"/>
    <property type="match status" value="1"/>
</dbReference>
<dbReference type="SUPFAM" id="SSF103473">
    <property type="entry name" value="MFS general substrate transporter"/>
    <property type="match status" value="1"/>
</dbReference>
<dbReference type="PROSITE" id="PS50850">
    <property type="entry name" value="MFS"/>
    <property type="match status" value="1"/>
</dbReference>
<name>SPX3_CHICK</name>
<feature type="chain" id="PRO_0000309280" description="Sugar phosphate exchanger 3">
    <location>
        <begin position="1"/>
        <end position="501"/>
    </location>
</feature>
<feature type="transmembrane region" description="Helical" evidence="2">
    <location>
        <begin position="20"/>
        <end position="40"/>
    </location>
</feature>
<feature type="transmembrane region" description="Helical" evidence="2">
    <location>
        <begin position="87"/>
        <end position="107"/>
    </location>
</feature>
<feature type="transmembrane region" description="Helical" evidence="2">
    <location>
        <begin position="119"/>
        <end position="139"/>
    </location>
</feature>
<feature type="transmembrane region" description="Helical" evidence="2">
    <location>
        <begin position="153"/>
        <end position="173"/>
    </location>
</feature>
<feature type="transmembrane region" description="Helical" evidence="2">
    <location>
        <begin position="183"/>
        <end position="203"/>
    </location>
</feature>
<feature type="transmembrane region" description="Helical" evidence="2">
    <location>
        <begin position="214"/>
        <end position="234"/>
    </location>
</feature>
<feature type="transmembrane region" description="Helical" evidence="2">
    <location>
        <begin position="298"/>
        <end position="320"/>
    </location>
</feature>
<feature type="transmembrane region" description="Helical" evidence="2">
    <location>
        <begin position="340"/>
        <end position="360"/>
    </location>
</feature>
<feature type="transmembrane region" description="Helical" evidence="2">
    <location>
        <begin position="364"/>
        <end position="384"/>
    </location>
</feature>
<feature type="transmembrane region" description="Helical" evidence="2">
    <location>
        <begin position="393"/>
        <end position="413"/>
    </location>
</feature>
<feature type="transmembrane region" description="Helical" evidence="2">
    <location>
        <begin position="435"/>
        <end position="455"/>
    </location>
</feature>
<feature type="transmembrane region" description="Helical" evidence="2">
    <location>
        <begin position="459"/>
        <end position="479"/>
    </location>
</feature>
<feature type="glycosylation site" description="N-linked (GlcNAc...) asparagine" evidence="2">
    <location>
        <position position="62"/>
    </location>
</feature>
<feature type="glycosylation site" description="N-linked (GlcNAc...) asparagine" evidence="2">
    <location>
        <position position="273"/>
    </location>
</feature>
<evidence type="ECO:0000250" key="1">
    <source>
        <dbReference type="UniProtKB" id="Q8NCC5"/>
    </source>
</evidence>
<evidence type="ECO:0000255" key="2"/>
<evidence type="ECO:0000305" key="3"/>
<accession>Q5F3N0</accession>